<name>RM16_YEAST</name>
<evidence type="ECO:0000255" key="1"/>
<evidence type="ECO:0000269" key="2">
    <source>
    </source>
</evidence>
<evidence type="ECO:0000269" key="3">
    <source>
    </source>
</evidence>
<evidence type="ECO:0000269" key="4">
    <source>
    </source>
</evidence>
<evidence type="ECO:0000269" key="5">
    <source>
    </source>
</evidence>
<evidence type="ECO:0000269" key="6">
    <source>
    </source>
</evidence>
<evidence type="ECO:0000269" key="7">
    <source>
    </source>
</evidence>
<evidence type="ECO:0000269" key="8">
    <source>
    </source>
</evidence>
<evidence type="ECO:0000303" key="9">
    <source>
    </source>
</evidence>
<evidence type="ECO:0000305" key="10"/>
<evidence type="ECO:0000305" key="11">
    <source>
    </source>
</evidence>
<evidence type="ECO:0000305" key="12">
    <source>
    </source>
</evidence>
<sequence length="232" mass="26518">MFPYLTRMNLSIKMGGLTLKESSPNAFLNNTTIARRFKHEYAPRFKIVQKKQKGRVPVRTGGSIKGSTLQFGKYGLRLKSEGIRISAQQLKEADNAIMRYVRPLNNGHLWRRLCTNVAVCIKGNETRMGKGKGGFDHWMVRVPTGKILFEINGDDLHEKVAREAFRKAGTKLPGVYEFVSLDSLVRVGLHSFKNPKDDPVKNFYDENAKKPSKKYLNILKSQEPQYKLFRGR</sequence>
<protein>
    <recommendedName>
        <fullName evidence="9">Large ribosomal subunit protein uL16m</fullName>
    </recommendedName>
    <alternativeName>
        <fullName>54S ribosomal protein L16, mitochondrial</fullName>
    </alternativeName>
    <alternativeName>
        <fullName>YmL47</fullName>
    </alternativeName>
</protein>
<feature type="transit peptide" description="Mitochondrion" evidence="1">
    <location>
        <begin position="1"/>
        <end position="41"/>
    </location>
</feature>
<feature type="chain" id="PRO_0000030469" description="Large ribosomal subunit protein uL16m">
    <location>
        <begin position="42"/>
        <end position="232"/>
    </location>
</feature>
<feature type="sequence conflict" description="In Ref. 1; CAA37942." evidence="10" ref="1">
    <original>R</original>
    <variation>Q</variation>
    <location>
        <position position="55"/>
    </location>
</feature>
<feature type="sequence conflict" description="In Ref. 1; CAA37942." evidence="10" ref="1">
    <original>V</original>
    <variation>L</variation>
    <location>
        <position position="119"/>
    </location>
</feature>
<feature type="sequence conflict" description="In Ref. 1; CAA37942." evidence="10" ref="1">
    <original>K</original>
    <variation>N</variation>
    <location>
        <position position="209"/>
    </location>
</feature>
<reference key="1">
    <citation type="submission" date="1993-12" db="EMBL/GenBank/DDBJ databases">
        <authorList>
            <person name="Ozier-Kalogeropoulos O."/>
        </authorList>
    </citation>
    <scope>NUCLEOTIDE SEQUENCE [GENOMIC DNA]</scope>
</reference>
<reference key="2">
    <citation type="journal article" date="1994" name="Yeast">
        <title>The sequence of a 22.4 kb DNA fragment from the left arm of yeast chromosome II reveals homologues to bacterial proline synthetase and murine alpha-adaptin, as well as a new permease and a DNA-binding protein.</title>
        <authorList>
            <person name="de Wergifosse P."/>
            <person name="Jacques B."/>
            <person name="Jonniaux J.-L."/>
            <person name="Purnelle B."/>
            <person name="Skala J."/>
            <person name="Goffeau A."/>
        </authorList>
    </citation>
    <scope>NUCLEOTIDE SEQUENCE [GENOMIC DNA]</scope>
    <source>
        <strain>ATCC 204508 / S288c</strain>
    </source>
</reference>
<reference key="3">
    <citation type="journal article" date="1994" name="EMBO J.">
        <title>Complete DNA sequence of yeast chromosome II.</title>
        <authorList>
            <person name="Feldmann H."/>
            <person name="Aigle M."/>
            <person name="Aljinovic G."/>
            <person name="Andre B."/>
            <person name="Baclet M.C."/>
            <person name="Barthe C."/>
            <person name="Baur A."/>
            <person name="Becam A.-M."/>
            <person name="Biteau N."/>
            <person name="Boles E."/>
            <person name="Brandt T."/>
            <person name="Brendel M."/>
            <person name="Brueckner M."/>
            <person name="Bussereau F."/>
            <person name="Christiansen C."/>
            <person name="Contreras R."/>
            <person name="Crouzet M."/>
            <person name="Cziepluch C."/>
            <person name="Demolis N."/>
            <person name="Delaveau T."/>
            <person name="Doignon F."/>
            <person name="Domdey H."/>
            <person name="Duesterhus S."/>
            <person name="Dubois E."/>
            <person name="Dujon B."/>
            <person name="El Bakkoury M."/>
            <person name="Entian K.-D."/>
            <person name="Feuermann M."/>
            <person name="Fiers W."/>
            <person name="Fobo G.M."/>
            <person name="Fritz C."/>
            <person name="Gassenhuber J."/>
            <person name="Glansdorff N."/>
            <person name="Goffeau A."/>
            <person name="Grivell L.A."/>
            <person name="de Haan M."/>
            <person name="Hein C."/>
            <person name="Herbert C.J."/>
            <person name="Hollenberg C.P."/>
            <person name="Holmstroem K."/>
            <person name="Jacq C."/>
            <person name="Jacquet M."/>
            <person name="Jauniaux J.-C."/>
            <person name="Jonniaux J.-L."/>
            <person name="Kallesoee T."/>
            <person name="Kiesau P."/>
            <person name="Kirchrath L."/>
            <person name="Koetter P."/>
            <person name="Korol S."/>
            <person name="Liebl S."/>
            <person name="Logghe M."/>
            <person name="Lohan A.J.E."/>
            <person name="Louis E.J."/>
            <person name="Li Z.Y."/>
            <person name="Maat M.J."/>
            <person name="Mallet L."/>
            <person name="Mannhaupt G."/>
            <person name="Messenguy F."/>
            <person name="Miosga T."/>
            <person name="Molemans F."/>
            <person name="Mueller S."/>
            <person name="Nasr F."/>
            <person name="Obermaier B."/>
            <person name="Perea J."/>
            <person name="Pierard A."/>
            <person name="Piravandi E."/>
            <person name="Pohl F.M."/>
            <person name="Pohl T.M."/>
            <person name="Potier S."/>
            <person name="Proft M."/>
            <person name="Purnelle B."/>
            <person name="Ramezani Rad M."/>
            <person name="Rieger M."/>
            <person name="Rose M."/>
            <person name="Schaaff-Gerstenschlaeger I."/>
            <person name="Scherens B."/>
            <person name="Schwarzlose C."/>
            <person name="Skala J."/>
            <person name="Slonimski P.P."/>
            <person name="Smits P.H.M."/>
            <person name="Souciet J.-L."/>
            <person name="Steensma H.Y."/>
            <person name="Stucka R."/>
            <person name="Urrestarazu L.A."/>
            <person name="van der Aart Q.J.M."/>
            <person name="Van Dyck L."/>
            <person name="Vassarotti A."/>
            <person name="Vetter I."/>
            <person name="Vierendeels F."/>
            <person name="Vissers S."/>
            <person name="Wagner G."/>
            <person name="de Wergifosse P."/>
            <person name="Wolfe K.H."/>
            <person name="Zagulski M."/>
            <person name="Zimmermann F.K."/>
            <person name="Mewes H.-W."/>
            <person name="Kleine K."/>
        </authorList>
    </citation>
    <scope>NUCLEOTIDE SEQUENCE [LARGE SCALE GENOMIC DNA]</scope>
    <source>
        <strain>ATCC 204508 / S288c</strain>
    </source>
</reference>
<reference key="4">
    <citation type="journal article" date="2014" name="G3 (Bethesda)">
        <title>The reference genome sequence of Saccharomyces cerevisiae: Then and now.</title>
        <authorList>
            <person name="Engel S.R."/>
            <person name="Dietrich F.S."/>
            <person name="Fisk D.G."/>
            <person name="Binkley G."/>
            <person name="Balakrishnan R."/>
            <person name="Costanzo M.C."/>
            <person name="Dwight S.S."/>
            <person name="Hitz B.C."/>
            <person name="Karra K."/>
            <person name="Nash R.S."/>
            <person name="Weng S."/>
            <person name="Wong E.D."/>
            <person name="Lloyd P."/>
            <person name="Skrzypek M.S."/>
            <person name="Miyasato S.R."/>
            <person name="Simison M."/>
            <person name="Cherry J.M."/>
        </authorList>
    </citation>
    <scope>GENOME REANNOTATION</scope>
    <source>
        <strain>ATCC 204508 / S288c</strain>
    </source>
</reference>
<reference key="5">
    <citation type="journal article" date="1997" name="Eur. J. Biochem.">
        <title>Identification and characterization of the genes for mitochondrial ribosomal proteins of Saccharomyces cerevisiae.</title>
        <authorList>
            <person name="Kitakawa M."/>
            <person name="Graack H.-R."/>
            <person name="Grohmann L."/>
            <person name="Goldschmidt-Reisin S."/>
            <person name="Herfurth E."/>
            <person name="Wittmann-Liebold B."/>
            <person name="Nishimura T."/>
            <person name="Isono K."/>
        </authorList>
    </citation>
    <scope>PROTEIN SEQUENCE OF 202-209</scope>
    <scope>SUBUNIT</scope>
    <source>
        <strain>07173</strain>
    </source>
</reference>
<reference key="6">
    <citation type="journal article" date="1995" name="Nucleic Acids Res.">
        <title>Identification of the yeast nuclear gene for the mitochondrial homologue of bacterial ribosomal protein L16.</title>
        <authorList>
            <person name="Pan C."/>
            <person name="Mason T.L."/>
        </authorList>
    </citation>
    <scope>FUNCTION</scope>
    <scope>SUBUNIT</scope>
</reference>
<reference key="7">
    <citation type="journal article" date="2003" name="Nature">
        <title>Global analysis of protein localization in budding yeast.</title>
        <authorList>
            <person name="Huh W.-K."/>
            <person name="Falvo J.V."/>
            <person name="Gerke L.C."/>
            <person name="Carroll A.S."/>
            <person name="Howson R.W."/>
            <person name="Weissman J.S."/>
            <person name="O'Shea E.K."/>
        </authorList>
    </citation>
    <scope>SUBCELLULAR LOCATION [LARGE SCALE ANALYSIS]</scope>
</reference>
<reference key="8">
    <citation type="journal article" date="2003" name="Nature">
        <title>Global analysis of protein expression in yeast.</title>
        <authorList>
            <person name="Ghaemmaghami S."/>
            <person name="Huh W.-K."/>
            <person name="Bower K."/>
            <person name="Howson R.W."/>
            <person name="Belle A."/>
            <person name="Dephoure N."/>
            <person name="O'Shea E.K."/>
            <person name="Weissman J.S."/>
        </authorList>
    </citation>
    <scope>LEVEL OF PROTEIN EXPRESSION [LARGE SCALE ANALYSIS]</scope>
</reference>
<reference key="9">
    <citation type="journal article" date="2003" name="Proc. Natl. Acad. Sci. U.S.A.">
        <title>The proteome of Saccharomyces cerevisiae mitochondria.</title>
        <authorList>
            <person name="Sickmann A."/>
            <person name="Reinders J."/>
            <person name="Wagner Y."/>
            <person name="Joppich C."/>
            <person name="Zahedi R.P."/>
            <person name="Meyer H.E."/>
            <person name="Schoenfisch B."/>
            <person name="Perschil I."/>
            <person name="Chacinska A."/>
            <person name="Guiard B."/>
            <person name="Rehling P."/>
            <person name="Pfanner N."/>
            <person name="Meisinger C."/>
        </authorList>
    </citation>
    <scope>SUBCELLULAR LOCATION [LARGE SCALE ANALYSIS]</scope>
    <source>
        <strain>ATCC 76625 / YPH499</strain>
    </source>
</reference>
<reference key="10">
    <citation type="journal article" date="2015" name="Nat. Commun.">
        <title>Organization of the mitochondrial translation machinery studied in situ by cryoelectron tomography.</title>
        <authorList>
            <person name="Pfeffer S."/>
            <person name="Woellhaf M.W."/>
            <person name="Herrmann J.M."/>
            <person name="Forster F."/>
        </authorList>
    </citation>
    <scope>SUBCELLULAR LOCATION</scope>
</reference>
<reference key="11">
    <citation type="journal article" date="2014" name="Science">
        <title>Structure of the yeast mitochondrial large ribosomal subunit.</title>
        <authorList>
            <person name="Amunts A."/>
            <person name="Brown A."/>
            <person name="Bai X.C."/>
            <person name="Llacer J.L."/>
            <person name="Hussain T."/>
            <person name="Emsley P."/>
            <person name="Long F."/>
            <person name="Murshudov G."/>
            <person name="Scheres S.H."/>
            <person name="Ramakrishnan V."/>
        </authorList>
    </citation>
    <scope>STRUCTURE BY ELECTRON MICROSCOPY (3.20 ANGSTROMS)</scope>
    <scope>SUBUNIT</scope>
</reference>
<dbReference type="EMBL" id="X53995">
    <property type="protein sequence ID" value="CAA37942.1"/>
    <property type="molecule type" value="Genomic_DNA"/>
</dbReference>
<dbReference type="EMBL" id="X78214">
    <property type="protein sequence ID" value="CAA55056.1"/>
    <property type="molecule type" value="Genomic_DNA"/>
</dbReference>
<dbReference type="EMBL" id="Z35799">
    <property type="protein sequence ID" value="CAA84858.1"/>
    <property type="molecule type" value="Genomic_DNA"/>
</dbReference>
<dbReference type="EMBL" id="BK006936">
    <property type="protein sequence ID" value="DAA07081.1"/>
    <property type="molecule type" value="Genomic_DNA"/>
</dbReference>
<dbReference type="PIR" id="S50292">
    <property type="entry name" value="S50292"/>
</dbReference>
<dbReference type="RefSeq" id="NP_009515.1">
    <property type="nucleotide sequence ID" value="NM_001178278.1"/>
</dbReference>
<dbReference type="PDB" id="3J6B">
    <property type="method" value="EM"/>
    <property type="resolution" value="3.20 A"/>
    <property type="chains" value="K=1-232"/>
</dbReference>
<dbReference type="PDB" id="5MRC">
    <property type="method" value="EM"/>
    <property type="resolution" value="3.25 A"/>
    <property type="chains" value="K=38-232"/>
</dbReference>
<dbReference type="PDB" id="5MRE">
    <property type="method" value="EM"/>
    <property type="resolution" value="3.75 A"/>
    <property type="chains" value="K=38-232"/>
</dbReference>
<dbReference type="PDB" id="5MRF">
    <property type="method" value="EM"/>
    <property type="resolution" value="4.97 A"/>
    <property type="chains" value="K=38-232"/>
</dbReference>
<dbReference type="PDBsum" id="3J6B"/>
<dbReference type="PDBsum" id="5MRC"/>
<dbReference type="PDBsum" id="5MRE"/>
<dbReference type="PDBsum" id="5MRF"/>
<dbReference type="EMDB" id="EMD-3551"/>
<dbReference type="EMDB" id="EMD-3552"/>
<dbReference type="EMDB" id="EMD-3553"/>
<dbReference type="SMR" id="P38064"/>
<dbReference type="BioGRID" id="32659">
    <property type="interactions" value="110"/>
</dbReference>
<dbReference type="ComplexPortal" id="CPX-1602">
    <property type="entry name" value="54S mitochondrial large ribosomal subunit"/>
</dbReference>
<dbReference type="DIP" id="DIP-3939N"/>
<dbReference type="FunCoup" id="P38064">
    <property type="interactions" value="346"/>
</dbReference>
<dbReference type="IntAct" id="P38064">
    <property type="interactions" value="87"/>
</dbReference>
<dbReference type="MINT" id="P38064"/>
<dbReference type="STRING" id="4932.YBL038W"/>
<dbReference type="PaxDb" id="4932-YBL038W"/>
<dbReference type="PeptideAtlas" id="P38064"/>
<dbReference type="EnsemblFungi" id="YBL038W_mRNA">
    <property type="protein sequence ID" value="YBL038W"/>
    <property type="gene ID" value="YBL038W"/>
</dbReference>
<dbReference type="GeneID" id="852242"/>
<dbReference type="KEGG" id="sce:YBL038W"/>
<dbReference type="AGR" id="SGD:S000000134"/>
<dbReference type="SGD" id="S000000134">
    <property type="gene designation" value="MRPL16"/>
</dbReference>
<dbReference type="VEuPathDB" id="FungiDB:YBL038W"/>
<dbReference type="eggNOG" id="KOG3422">
    <property type="taxonomic scope" value="Eukaryota"/>
</dbReference>
<dbReference type="GeneTree" id="ENSGT00390000002038"/>
<dbReference type="HOGENOM" id="CLU_078858_0_1_1"/>
<dbReference type="InParanoid" id="P38064"/>
<dbReference type="OMA" id="MPGMYEF"/>
<dbReference type="OrthoDB" id="268521at2759"/>
<dbReference type="BioCyc" id="YEAST:G3O-28940-MONOMER"/>
<dbReference type="BioGRID-ORCS" id="852242">
    <property type="hits" value="2 hits in 10 CRISPR screens"/>
</dbReference>
<dbReference type="PRO" id="PR:P38064"/>
<dbReference type="Proteomes" id="UP000002311">
    <property type="component" value="Chromosome II"/>
</dbReference>
<dbReference type="RNAct" id="P38064">
    <property type="molecule type" value="protein"/>
</dbReference>
<dbReference type="GO" id="GO:0005743">
    <property type="term" value="C:mitochondrial inner membrane"/>
    <property type="evidence" value="ECO:0000303"/>
    <property type="project" value="ComplexPortal"/>
</dbReference>
<dbReference type="GO" id="GO:0005762">
    <property type="term" value="C:mitochondrial large ribosomal subunit"/>
    <property type="evidence" value="ECO:0000314"/>
    <property type="project" value="SGD"/>
</dbReference>
<dbReference type="GO" id="GO:0005739">
    <property type="term" value="C:mitochondrion"/>
    <property type="evidence" value="ECO:0007005"/>
    <property type="project" value="SGD"/>
</dbReference>
<dbReference type="GO" id="GO:0019843">
    <property type="term" value="F:rRNA binding"/>
    <property type="evidence" value="ECO:0000318"/>
    <property type="project" value="GO_Central"/>
</dbReference>
<dbReference type="GO" id="GO:0003735">
    <property type="term" value="F:structural constituent of ribosome"/>
    <property type="evidence" value="ECO:0000314"/>
    <property type="project" value="SGD"/>
</dbReference>
<dbReference type="GO" id="GO:0032543">
    <property type="term" value="P:mitochondrial translation"/>
    <property type="evidence" value="ECO:0000315"/>
    <property type="project" value="SGD"/>
</dbReference>
<dbReference type="CDD" id="cd01433">
    <property type="entry name" value="Ribosomal_L16_L10e"/>
    <property type="match status" value="1"/>
</dbReference>
<dbReference type="FunFam" id="3.90.1170.10:FF:000010">
    <property type="entry name" value="60S ribosomal protein L16, mitochondrial"/>
    <property type="match status" value="1"/>
</dbReference>
<dbReference type="Gene3D" id="3.90.1170.10">
    <property type="entry name" value="Ribosomal protein L10e/L16"/>
    <property type="match status" value="1"/>
</dbReference>
<dbReference type="InterPro" id="IPR047873">
    <property type="entry name" value="Ribosomal_uL16"/>
</dbReference>
<dbReference type="InterPro" id="IPR000114">
    <property type="entry name" value="Ribosomal_uL16_bact-type"/>
</dbReference>
<dbReference type="InterPro" id="IPR020798">
    <property type="entry name" value="Ribosomal_uL16_CS"/>
</dbReference>
<dbReference type="InterPro" id="IPR016180">
    <property type="entry name" value="Ribosomal_uL16_dom"/>
</dbReference>
<dbReference type="InterPro" id="IPR036920">
    <property type="entry name" value="Ribosomal_uL16_sf"/>
</dbReference>
<dbReference type="NCBIfam" id="TIGR01164">
    <property type="entry name" value="rplP_bact"/>
    <property type="match status" value="1"/>
</dbReference>
<dbReference type="PANTHER" id="PTHR12220">
    <property type="entry name" value="50S/60S RIBOSOMAL PROTEIN L16"/>
    <property type="match status" value="1"/>
</dbReference>
<dbReference type="PANTHER" id="PTHR12220:SF13">
    <property type="entry name" value="LARGE RIBOSOMAL SUBUNIT PROTEIN UL16M"/>
    <property type="match status" value="1"/>
</dbReference>
<dbReference type="Pfam" id="PF00252">
    <property type="entry name" value="Ribosomal_L16"/>
    <property type="match status" value="1"/>
</dbReference>
<dbReference type="PRINTS" id="PR00060">
    <property type="entry name" value="RIBOSOMALL16"/>
</dbReference>
<dbReference type="SUPFAM" id="SSF54686">
    <property type="entry name" value="Ribosomal protein L16p/L10e"/>
    <property type="match status" value="1"/>
</dbReference>
<dbReference type="PROSITE" id="PS00586">
    <property type="entry name" value="RIBOSOMAL_L16_1"/>
    <property type="match status" value="1"/>
</dbReference>
<dbReference type="PROSITE" id="PS00701">
    <property type="entry name" value="RIBOSOMAL_L16_2"/>
    <property type="match status" value="1"/>
</dbReference>
<keyword id="KW-0002">3D-structure</keyword>
<keyword id="KW-0903">Direct protein sequencing</keyword>
<keyword id="KW-0496">Mitochondrion</keyword>
<keyword id="KW-1185">Reference proteome</keyword>
<keyword id="KW-0687">Ribonucleoprotein</keyword>
<keyword id="KW-0689">Ribosomal protein</keyword>
<keyword id="KW-0809">Transit peptide</keyword>
<comment type="function">
    <text evidence="11 12">Component of the mitochondrial ribosome (mitoribosome), a dedicated translation machinery responsible for the synthesis of mitochondrial genome-encoded proteins, including at least some of the essential transmembrane subunits of the mitochondrial respiratory chain. The mitoribosomes are attached to the mitochondrial inner membrane and translation products are cotranslationally integrated into the membrane.</text>
</comment>
<comment type="subunit">
    <text evidence="5 7 8">Component of the mitochondrial large ribosomal subunit (mt-LSU). Mature yeast 74S mitochondrial ribosomes consist of a small (37S) and a large (54S) subunit. The 37S small subunit contains a 15S ribosomal RNA (15S mt-rRNA) and 34 different proteins. The 54S large subunit contains a 21S rRNA (21S mt-rRNA) and 46 different proteins.</text>
</comment>
<comment type="subcellular location">
    <subcellularLocation>
        <location evidence="2 4">Mitochondrion</location>
    </subcellularLocation>
    <text evidence="6">Mitoribosomes are tethered to the mitochondrial inner membrane and spatially aligned with the membrane insertion machinery through two distinct membrane contact sites, formed by the 21S rRNA expansion segment 96-ES1 and the inner membrane protein MBA1.</text>
</comment>
<comment type="miscellaneous">
    <text evidence="3">Present with 2900 molecules/cell in log phase SD medium.</text>
</comment>
<comment type="similarity">
    <text evidence="10">Belongs to the universal ribosomal protein uL16 family.</text>
</comment>
<accession>P38064</accession>
<accession>D6VPW1</accession>
<accession>Q07216</accession>
<gene>
    <name type="primary">MRPL16</name>
    <name type="synonym">RML16</name>
    <name type="ordered locus">YBL038W</name>
    <name type="ORF">YBL0411</name>
</gene>
<organism>
    <name type="scientific">Saccharomyces cerevisiae (strain ATCC 204508 / S288c)</name>
    <name type="common">Baker's yeast</name>
    <dbReference type="NCBI Taxonomy" id="559292"/>
    <lineage>
        <taxon>Eukaryota</taxon>
        <taxon>Fungi</taxon>
        <taxon>Dikarya</taxon>
        <taxon>Ascomycota</taxon>
        <taxon>Saccharomycotina</taxon>
        <taxon>Saccharomycetes</taxon>
        <taxon>Saccharomycetales</taxon>
        <taxon>Saccharomycetaceae</taxon>
        <taxon>Saccharomyces</taxon>
    </lineage>
</organism>
<proteinExistence type="evidence at protein level"/>